<keyword id="KW-0121">Carboxypeptidase</keyword>
<keyword id="KW-0325">Glycoprotein</keyword>
<keyword id="KW-0378">Hydrolase</keyword>
<keyword id="KW-0645">Protease</keyword>
<keyword id="KW-1185">Reference proteome</keyword>
<keyword id="KW-0964">Secreted</keyword>
<keyword id="KW-0732">Signal</keyword>
<feature type="signal peptide" evidence="2">
    <location>
        <begin position="1"/>
        <end position="19"/>
    </location>
</feature>
<feature type="chain" id="PRO_0000434921" description="Probable serine carboxypeptidase ARB_06414">
    <location>
        <begin position="20"/>
        <end position="529"/>
    </location>
</feature>
<feature type="region of interest" description="Disordered" evidence="4">
    <location>
        <begin position="171"/>
        <end position="191"/>
    </location>
</feature>
<feature type="active site" evidence="1">
    <location>
        <position position="225"/>
    </location>
</feature>
<feature type="active site" evidence="1">
    <location>
        <position position="434"/>
    </location>
</feature>
<feature type="active site" evidence="1">
    <location>
        <position position="503"/>
    </location>
</feature>
<feature type="glycosylation site" description="N-linked (GlcNAc...) asparagine" evidence="3">
    <location>
        <position position="284"/>
    </location>
</feature>
<feature type="glycosylation site" description="N-linked (GlcNAc...) asparagine" evidence="3">
    <location>
        <position position="377"/>
    </location>
</feature>
<feature type="glycosylation site" description="N-linked (GlcNAc...) asparagine" evidence="3">
    <location>
        <position position="440"/>
    </location>
</feature>
<feature type="glycosylation site" description="N-linked (GlcNAc...) asparagine" evidence="3">
    <location>
        <position position="448"/>
    </location>
</feature>
<accession>D4AQA7</accession>
<gene>
    <name type="ORF">ARB_06414</name>
</gene>
<protein>
    <recommendedName>
        <fullName evidence="6">Probable serine carboxypeptidase ARB_06414</fullName>
        <ecNumber evidence="1">3.4.16.-</ecNumber>
    </recommendedName>
</protein>
<dbReference type="EC" id="3.4.16.-" evidence="1"/>
<dbReference type="EMBL" id="ABSU01000005">
    <property type="protein sequence ID" value="EFE34651.1"/>
    <property type="molecule type" value="Genomic_DNA"/>
</dbReference>
<dbReference type="RefSeq" id="XP_003015291.1">
    <property type="nucleotide sequence ID" value="XM_003015245.1"/>
</dbReference>
<dbReference type="SMR" id="D4AQA7"/>
<dbReference type="ESTHER" id="artbc-d4aqa7">
    <property type="family name" value="Carboxypeptidase_S10"/>
</dbReference>
<dbReference type="MEROPS" id="S10.014"/>
<dbReference type="GeneID" id="9521015"/>
<dbReference type="KEGG" id="abe:ARB_06414"/>
<dbReference type="eggNOG" id="KOG1282">
    <property type="taxonomic scope" value="Eukaryota"/>
</dbReference>
<dbReference type="HOGENOM" id="CLU_008523_12_3_1"/>
<dbReference type="OMA" id="LMSTCDF"/>
<dbReference type="Proteomes" id="UP000008866">
    <property type="component" value="Unassembled WGS sequence"/>
</dbReference>
<dbReference type="GO" id="GO:0005576">
    <property type="term" value="C:extracellular region"/>
    <property type="evidence" value="ECO:0007669"/>
    <property type="project" value="UniProtKB-SubCell"/>
</dbReference>
<dbReference type="GO" id="GO:0004185">
    <property type="term" value="F:serine-type carboxypeptidase activity"/>
    <property type="evidence" value="ECO:0007669"/>
    <property type="project" value="InterPro"/>
</dbReference>
<dbReference type="GO" id="GO:0006508">
    <property type="term" value="P:proteolysis"/>
    <property type="evidence" value="ECO:0007669"/>
    <property type="project" value="UniProtKB-KW"/>
</dbReference>
<dbReference type="FunFam" id="3.40.50.1820:FF:000118">
    <property type="entry name" value="Carboxypeptidase"/>
    <property type="match status" value="1"/>
</dbReference>
<dbReference type="Gene3D" id="3.40.50.1820">
    <property type="entry name" value="alpha/beta hydrolase"/>
    <property type="match status" value="1"/>
</dbReference>
<dbReference type="InterPro" id="IPR029058">
    <property type="entry name" value="AB_hydrolase_fold"/>
</dbReference>
<dbReference type="InterPro" id="IPR001563">
    <property type="entry name" value="Peptidase_S10"/>
</dbReference>
<dbReference type="InterPro" id="IPR018202">
    <property type="entry name" value="Ser_caboxypep_ser_AS"/>
</dbReference>
<dbReference type="PANTHER" id="PTHR11802:SF479">
    <property type="entry name" value="CARBOXYPEPTIDASE"/>
    <property type="match status" value="1"/>
</dbReference>
<dbReference type="PANTHER" id="PTHR11802">
    <property type="entry name" value="SERINE PROTEASE FAMILY S10 SERINE CARBOXYPEPTIDASE"/>
    <property type="match status" value="1"/>
</dbReference>
<dbReference type="Pfam" id="PF00450">
    <property type="entry name" value="Peptidase_S10"/>
    <property type="match status" value="1"/>
</dbReference>
<dbReference type="PRINTS" id="PR00724">
    <property type="entry name" value="CRBOXYPTASEC"/>
</dbReference>
<dbReference type="SUPFAM" id="SSF53474">
    <property type="entry name" value="alpha/beta-Hydrolases"/>
    <property type="match status" value="1"/>
</dbReference>
<dbReference type="PROSITE" id="PS00131">
    <property type="entry name" value="CARBOXYPEPT_SER_SER"/>
    <property type="match status" value="1"/>
</dbReference>
<reference key="1">
    <citation type="journal article" date="2011" name="Genome Biol.">
        <title>Comparative and functional genomics provide insights into the pathogenicity of dermatophytic fungi.</title>
        <authorList>
            <person name="Burmester A."/>
            <person name="Shelest E."/>
            <person name="Gloeckner G."/>
            <person name="Heddergott C."/>
            <person name="Schindler S."/>
            <person name="Staib P."/>
            <person name="Heidel A."/>
            <person name="Felder M."/>
            <person name="Petzold A."/>
            <person name="Szafranski K."/>
            <person name="Feuermann M."/>
            <person name="Pedruzzi I."/>
            <person name="Priebe S."/>
            <person name="Groth M."/>
            <person name="Winkler R."/>
            <person name="Li W."/>
            <person name="Kniemeyer O."/>
            <person name="Schroeckh V."/>
            <person name="Hertweck C."/>
            <person name="Hube B."/>
            <person name="White T.C."/>
            <person name="Platzer M."/>
            <person name="Guthke R."/>
            <person name="Heitman J."/>
            <person name="Woestemeyer J."/>
            <person name="Zipfel P.F."/>
            <person name="Monod M."/>
            <person name="Brakhage A.A."/>
        </authorList>
    </citation>
    <scope>NUCLEOTIDE SEQUENCE [LARGE SCALE GENOMIC DNA]</scope>
    <source>
        <strain>ATCC MYA-4681 / CBS 112371</strain>
    </source>
</reference>
<reference key="2">
    <citation type="journal article" date="2011" name="Proteomics">
        <title>Identification of novel secreted proteases during extracellular proteolysis by dermatophytes at acidic pH.</title>
        <authorList>
            <person name="Sriranganadane D."/>
            <person name="Waridel P."/>
            <person name="Salamin K."/>
            <person name="Feuermann M."/>
            <person name="Mignon B."/>
            <person name="Staib P."/>
            <person name="Neuhaus J.M."/>
            <person name="Quadroni M."/>
            <person name="Monod M."/>
        </authorList>
    </citation>
    <scope>IDENTIFICATION BY MASS SPECTROMETRY</scope>
    <scope>SUBCELLULAR LOCATION</scope>
</reference>
<proteinExistence type="evidence at protein level"/>
<comment type="function">
    <text evidence="1">Removes acidic, neutral and basic amino acids as well as proline from the C-terminal position.</text>
</comment>
<comment type="subcellular location">
    <subcellularLocation>
        <location evidence="5">Secreted</location>
    </subcellularLocation>
</comment>
<comment type="similarity">
    <text evidence="6">Belongs to the peptidase S10 family.</text>
</comment>
<organism>
    <name type="scientific">Arthroderma benhamiae (strain ATCC MYA-4681 / CBS 112371)</name>
    <name type="common">Trichophyton mentagrophytes</name>
    <dbReference type="NCBI Taxonomy" id="663331"/>
    <lineage>
        <taxon>Eukaryota</taxon>
        <taxon>Fungi</taxon>
        <taxon>Dikarya</taxon>
        <taxon>Ascomycota</taxon>
        <taxon>Pezizomycotina</taxon>
        <taxon>Eurotiomycetes</taxon>
        <taxon>Eurotiomycetidae</taxon>
        <taxon>Onygenales</taxon>
        <taxon>Arthrodermataceae</taxon>
        <taxon>Trichophyton</taxon>
    </lineage>
</organism>
<sequence length="529" mass="59419">MRGLSYFVLALSAIDAAAAASLPFLRSLQHVGRRDPAARNLPNYDFSAIPPVEKRQTASRLNGKTKKYAVDGTKIPEVQFDIGESYAGLMPISTRKDESRELYFWYFPSENPAAKDEITIWLNGGPGCSSLEGLLQENGPFLWQYGTLYPVPNPWSWTKLTNMVWVEQYNPTDDNPSRPVGTGFSQGKPSVRSQEDVATQFLGFFRNFVDTFDLHGKKIYIVGESYAGLYVPYIAHAMFEKKNKRYFNVESTMIFDPSINKDEILTQVPAVPFVEHWKGLFPFNETFTKQIHDMADKCGYSSYMKEHLVYPPKGKLPALPKATPECDVWTAIFDAVSLVNPCFDVYQVATTCPLLYDVLGYPGSFEYLPAGANVYFNRTDVQKAINAPLQKWTECSERPVFVDGKDNSEPSSFTIIPDVIEKSPRTIIAHGDLDYVLISNGTLLSIQNMTWGGAQGFSQEPSKPLFVPYHDRGSLSTLSGAGVLGRHHTERKLTYVELYLTGHMGPQYNPSASYRILEYLLGRIDDLSK</sequence>
<evidence type="ECO:0000250" key="1">
    <source>
        <dbReference type="UniProtKB" id="P52719"/>
    </source>
</evidence>
<evidence type="ECO:0000255" key="2"/>
<evidence type="ECO:0000255" key="3">
    <source>
        <dbReference type="PROSITE-ProRule" id="PRU00498"/>
    </source>
</evidence>
<evidence type="ECO:0000256" key="4">
    <source>
        <dbReference type="SAM" id="MobiDB-lite"/>
    </source>
</evidence>
<evidence type="ECO:0000269" key="5">
    <source>
    </source>
</evidence>
<evidence type="ECO:0000305" key="6"/>
<name>PEPS_ARTBC</name>